<name>PP173_ARATH</name>
<gene>
    <name type="ordered locus">At2g27800</name>
    <name type="ORF">F15K20.10</name>
</gene>
<protein>
    <recommendedName>
        <fullName>Pentatricopeptide repeat-containing protein At2g27800, mitochondrial</fullName>
    </recommendedName>
</protein>
<proteinExistence type="inferred from homology"/>
<keyword id="KW-0496">Mitochondrion</keyword>
<keyword id="KW-1185">Reference proteome</keyword>
<keyword id="KW-0677">Repeat</keyword>
<keyword id="KW-0809">Transit peptide</keyword>
<feature type="transit peptide" description="Mitochondrion" evidence="1">
    <location>
        <begin position="1"/>
        <end position="67"/>
    </location>
</feature>
<feature type="chain" id="PRO_0000356032" description="Pentatricopeptide repeat-containing protein At2g27800, mitochondrial">
    <location>
        <begin position="68"/>
        <end position="442"/>
    </location>
</feature>
<feature type="repeat" description="PPR 1">
    <location>
        <begin position="206"/>
        <end position="236"/>
    </location>
</feature>
<feature type="repeat" description="PPR 2">
    <location>
        <begin position="244"/>
        <end position="286"/>
    </location>
</feature>
<feature type="repeat" description="PPR 3">
    <location>
        <begin position="287"/>
        <end position="322"/>
    </location>
</feature>
<feature type="repeat" description="PPR 4">
    <location>
        <begin position="323"/>
        <end position="357"/>
    </location>
</feature>
<feature type="repeat" description="PPR 5">
    <location>
        <begin position="358"/>
        <end position="392"/>
    </location>
</feature>
<feature type="repeat" description="PPR 6">
    <location>
        <begin position="393"/>
        <end position="427"/>
    </location>
</feature>
<dbReference type="EMBL" id="AC005824">
    <property type="protein sequence ID" value="AAC73020.1"/>
    <property type="status" value="ALT_SEQ"/>
    <property type="molecule type" value="Genomic_DNA"/>
</dbReference>
<dbReference type="EMBL" id="CP002685">
    <property type="protein sequence ID" value="AEC08046.1"/>
    <property type="molecule type" value="Genomic_DNA"/>
</dbReference>
<dbReference type="PIR" id="B84677">
    <property type="entry name" value="B84677"/>
</dbReference>
<dbReference type="RefSeq" id="NP_180348.2">
    <property type="nucleotide sequence ID" value="NM_128340.3"/>
</dbReference>
<dbReference type="SMR" id="Q9ZUY1"/>
<dbReference type="FunCoup" id="Q9ZUY1">
    <property type="interactions" value="840"/>
</dbReference>
<dbReference type="STRING" id="3702.Q9ZUY1"/>
<dbReference type="PaxDb" id="3702-AT2G27800.1"/>
<dbReference type="EnsemblPlants" id="AT2G27800.1">
    <property type="protein sequence ID" value="AT2G27800.1"/>
    <property type="gene ID" value="AT2G27800"/>
</dbReference>
<dbReference type="GeneID" id="817327"/>
<dbReference type="Gramene" id="AT2G27800.1">
    <property type="protein sequence ID" value="AT2G27800.1"/>
    <property type="gene ID" value="AT2G27800"/>
</dbReference>
<dbReference type="KEGG" id="ath:AT2G27800"/>
<dbReference type="Araport" id="AT2G27800"/>
<dbReference type="TAIR" id="AT2G27800"/>
<dbReference type="eggNOG" id="KOG4197">
    <property type="taxonomic scope" value="Eukaryota"/>
</dbReference>
<dbReference type="HOGENOM" id="CLU_040105_0_0_1"/>
<dbReference type="InParanoid" id="Q9ZUY1"/>
<dbReference type="OMA" id="CRPTIRT"/>
<dbReference type="OrthoDB" id="185373at2759"/>
<dbReference type="PhylomeDB" id="Q9ZUY1"/>
<dbReference type="PRO" id="PR:Q9ZUY1"/>
<dbReference type="Proteomes" id="UP000006548">
    <property type="component" value="Chromosome 2"/>
</dbReference>
<dbReference type="ExpressionAtlas" id="Q9ZUY1">
    <property type="expression patterns" value="baseline and differential"/>
</dbReference>
<dbReference type="GO" id="GO:0005739">
    <property type="term" value="C:mitochondrion"/>
    <property type="evidence" value="ECO:0007669"/>
    <property type="project" value="UniProtKB-SubCell"/>
</dbReference>
<dbReference type="Gene3D" id="1.25.40.10">
    <property type="entry name" value="Tetratricopeptide repeat domain"/>
    <property type="match status" value="2"/>
</dbReference>
<dbReference type="InterPro" id="IPR002885">
    <property type="entry name" value="Pentatricopeptide_rpt"/>
</dbReference>
<dbReference type="InterPro" id="IPR011990">
    <property type="entry name" value="TPR-like_helical_dom_sf"/>
</dbReference>
<dbReference type="NCBIfam" id="TIGR00756">
    <property type="entry name" value="PPR"/>
    <property type="match status" value="3"/>
</dbReference>
<dbReference type="PANTHER" id="PTHR47941">
    <property type="entry name" value="PENTATRICOPEPTIDE REPEAT-CONTAINING PROTEIN 3, MITOCHONDRIAL"/>
    <property type="match status" value="1"/>
</dbReference>
<dbReference type="Pfam" id="PF01535">
    <property type="entry name" value="PPR"/>
    <property type="match status" value="1"/>
</dbReference>
<dbReference type="Pfam" id="PF12854">
    <property type="entry name" value="PPR_1"/>
    <property type="match status" value="1"/>
</dbReference>
<dbReference type="Pfam" id="PF13041">
    <property type="entry name" value="PPR_2"/>
    <property type="match status" value="1"/>
</dbReference>
<dbReference type="Pfam" id="PF13812">
    <property type="entry name" value="PPR_3"/>
    <property type="match status" value="1"/>
</dbReference>
<dbReference type="PROSITE" id="PS51375">
    <property type="entry name" value="PPR"/>
    <property type="match status" value="6"/>
</dbReference>
<sequence length="442" mass="50697">MSATRSTFLGSIFRTAKARILISPIARRSLPSPNFTSSRFHTSSSLRQSRIEGSIPRSFLPSIHVRFHSVSASTWFSSRRTSSQGRLASVSMYIQYSTSVPTRSLRRRISNRKKSSAKPILNVSKFHETISKLPPRFTPEELADAITLEEDPFLCFHLFNWASQQPRFTHENCSYHIAIRKLGAAKMYQEMDDIVNQVLSVRHIGNENLYNSIIFYFTKAGKLIRAVNIFRHMVTSKNLECRPTIRTYHILFKALLGRGNNSYINHVYMETVRSLFRQMVDSGIEPDVFALNCLVKGYVLSLHVNDALRIFHQMSVVYDCEPNSFTYDYLIHGLCAQGRTINARELLSEMKGKGFVPNGKSYNSLVNAFALSGEIDDAVKCLWEMIENGRVVDFISYRTLVDESCRKGKYDEATRLLEMLREKQLVDRDSYDKLVNVLHKDL</sequence>
<accession>Q9ZUY1</accession>
<comment type="subcellular location">
    <subcellularLocation>
        <location evidence="2">Mitochondrion</location>
    </subcellularLocation>
</comment>
<comment type="similarity">
    <text evidence="2">Belongs to the PPR family. P subfamily.</text>
</comment>
<comment type="sequence caution" evidence="2">
    <conflict type="erroneous gene model prediction">
        <sequence resource="EMBL-CDS" id="AAC73020"/>
    </conflict>
</comment>
<comment type="online information" name="Pentatricopeptide repeat proteins">
    <link uri="https://ppr.plantenergy.uwa.edu.au"/>
</comment>
<evidence type="ECO:0000255" key="1"/>
<evidence type="ECO:0000305" key="2"/>
<organism>
    <name type="scientific">Arabidopsis thaliana</name>
    <name type="common">Mouse-ear cress</name>
    <dbReference type="NCBI Taxonomy" id="3702"/>
    <lineage>
        <taxon>Eukaryota</taxon>
        <taxon>Viridiplantae</taxon>
        <taxon>Streptophyta</taxon>
        <taxon>Embryophyta</taxon>
        <taxon>Tracheophyta</taxon>
        <taxon>Spermatophyta</taxon>
        <taxon>Magnoliopsida</taxon>
        <taxon>eudicotyledons</taxon>
        <taxon>Gunneridae</taxon>
        <taxon>Pentapetalae</taxon>
        <taxon>rosids</taxon>
        <taxon>malvids</taxon>
        <taxon>Brassicales</taxon>
        <taxon>Brassicaceae</taxon>
        <taxon>Camelineae</taxon>
        <taxon>Arabidopsis</taxon>
    </lineage>
</organism>
<reference key="1">
    <citation type="journal article" date="1999" name="Nature">
        <title>Sequence and analysis of chromosome 2 of the plant Arabidopsis thaliana.</title>
        <authorList>
            <person name="Lin X."/>
            <person name="Kaul S."/>
            <person name="Rounsley S.D."/>
            <person name="Shea T.P."/>
            <person name="Benito M.-I."/>
            <person name="Town C.D."/>
            <person name="Fujii C.Y."/>
            <person name="Mason T.M."/>
            <person name="Bowman C.L."/>
            <person name="Barnstead M.E."/>
            <person name="Feldblyum T.V."/>
            <person name="Buell C.R."/>
            <person name="Ketchum K.A."/>
            <person name="Lee J.J."/>
            <person name="Ronning C.M."/>
            <person name="Koo H.L."/>
            <person name="Moffat K.S."/>
            <person name="Cronin L.A."/>
            <person name="Shen M."/>
            <person name="Pai G."/>
            <person name="Van Aken S."/>
            <person name="Umayam L."/>
            <person name="Tallon L.J."/>
            <person name="Gill J.E."/>
            <person name="Adams M.D."/>
            <person name="Carrera A.J."/>
            <person name="Creasy T.H."/>
            <person name="Goodman H.M."/>
            <person name="Somerville C.R."/>
            <person name="Copenhaver G.P."/>
            <person name="Preuss D."/>
            <person name="Nierman W.C."/>
            <person name="White O."/>
            <person name="Eisen J.A."/>
            <person name="Salzberg S.L."/>
            <person name="Fraser C.M."/>
            <person name="Venter J.C."/>
        </authorList>
    </citation>
    <scope>NUCLEOTIDE SEQUENCE [LARGE SCALE GENOMIC DNA]</scope>
    <source>
        <strain>cv. Columbia</strain>
    </source>
</reference>
<reference key="2">
    <citation type="journal article" date="2017" name="Plant J.">
        <title>Araport11: a complete reannotation of the Arabidopsis thaliana reference genome.</title>
        <authorList>
            <person name="Cheng C.Y."/>
            <person name="Krishnakumar V."/>
            <person name="Chan A.P."/>
            <person name="Thibaud-Nissen F."/>
            <person name="Schobel S."/>
            <person name="Town C.D."/>
        </authorList>
    </citation>
    <scope>GENOME REANNOTATION</scope>
    <source>
        <strain>cv. Columbia</strain>
    </source>
</reference>
<reference key="3">
    <citation type="journal article" date="2004" name="Plant Cell">
        <title>Genome-wide analysis of Arabidopsis pentatricopeptide repeat proteins reveals their essential role in organelle biogenesis.</title>
        <authorList>
            <person name="Lurin C."/>
            <person name="Andres C."/>
            <person name="Aubourg S."/>
            <person name="Bellaoui M."/>
            <person name="Bitton F."/>
            <person name="Bruyere C."/>
            <person name="Caboche M."/>
            <person name="Debast C."/>
            <person name="Gualberto J."/>
            <person name="Hoffmann B."/>
            <person name="Lecharny A."/>
            <person name="Le Ret M."/>
            <person name="Martin-Magniette M.-L."/>
            <person name="Mireau H."/>
            <person name="Peeters N."/>
            <person name="Renou J.-P."/>
            <person name="Szurek B."/>
            <person name="Taconnat L."/>
            <person name="Small I."/>
        </authorList>
    </citation>
    <scope>GENE FAMILY</scope>
</reference>